<feature type="chain" id="PRO_0000274457" description="Thiamine import ATP-binding protein ThiQ">
    <location>
        <begin position="1"/>
        <end position="235"/>
    </location>
</feature>
<feature type="domain" description="ABC transporter" evidence="1">
    <location>
        <begin position="2"/>
        <end position="230"/>
    </location>
</feature>
<feature type="binding site" evidence="1">
    <location>
        <begin position="32"/>
        <end position="39"/>
    </location>
    <ligand>
        <name>ATP</name>
        <dbReference type="ChEBI" id="CHEBI:30616"/>
    </ligand>
</feature>
<protein>
    <recommendedName>
        <fullName evidence="1">Thiamine import ATP-binding protein ThiQ</fullName>
        <ecNumber evidence="1 5">7.6.2.15</ecNumber>
    </recommendedName>
</protein>
<comment type="function">
    <text evidence="2 5">Part of the ABC transporter complex ThiBPQ involved in thiamine import (PubMed:9535878). Responsible for energy coupling to the transport system (Probable). Is also involved in thiamine pyrophosphate (TPP) transport (PubMed:9535878).</text>
</comment>
<comment type="catalytic activity">
    <reaction evidence="1 5">
        <text>thiamine(out) + ATP + H2O = thiamine(in) + ADP + phosphate + H(+)</text>
        <dbReference type="Rhea" id="RHEA:29811"/>
        <dbReference type="ChEBI" id="CHEBI:15377"/>
        <dbReference type="ChEBI" id="CHEBI:15378"/>
        <dbReference type="ChEBI" id="CHEBI:18385"/>
        <dbReference type="ChEBI" id="CHEBI:30616"/>
        <dbReference type="ChEBI" id="CHEBI:43474"/>
        <dbReference type="ChEBI" id="CHEBI:456216"/>
        <dbReference type="EC" id="7.6.2.15"/>
    </reaction>
</comment>
<comment type="subunit">
    <text evidence="1 5">The complex is composed of two ATP-binding proteins (ThiQ), two transmembrane proteins (ThiP) and a solute-binding protein (ThiB).</text>
</comment>
<comment type="subcellular location">
    <subcellularLocation>
        <location evidence="1 4">Cell inner membrane</location>
        <topology evidence="1 4">Peripheral membrane protein</topology>
    </subcellularLocation>
</comment>
<comment type="induction">
    <text evidence="2">Expression is repressed by thiamine.</text>
</comment>
<comment type="disruption phenotype">
    <text evidence="2">Insertions in thiBPQ cause a defect in the transport of both thiamine and TPP.</text>
</comment>
<comment type="similarity">
    <text evidence="1 4">Belongs to the ABC transporter superfamily. Thiamine importer (TC 3.A.1.19.1) family.</text>
</comment>
<proteinExistence type="evidence at protein level"/>
<gene>
    <name evidence="1 3" type="primary">thiQ</name>
    <name type="ordered locus">STM0106</name>
</gene>
<sequence length="235" mass="25571">MLKLIDITWLYHHLPMRFTLAVERGEQVAILGPSGAGKSTLLNLIAGFLAPASGTLLIAGDDHTLTPPSRRPVSMLFQENNLFSHLNVQQNIGLGLNPGLTLNASQREKRDAIAHQMGIESLMTRLPGELSGGQRQRVALARCLVREQPVLLLDEPFSALDPALRQEMLTLVSDICRERQLTLLMVSHSVEDAARIAPRSIVVADGRIAWQGKTDELLSGQASASALLGIKSHIL</sequence>
<dbReference type="EC" id="7.6.2.15" evidence="1 5"/>
<dbReference type="EMBL" id="AE006468">
    <property type="protein sequence ID" value="AAL19070.1"/>
    <property type="molecule type" value="Genomic_DNA"/>
</dbReference>
<dbReference type="RefSeq" id="WP_000915965.1">
    <property type="nucleotide sequence ID" value="NC_003197.2"/>
</dbReference>
<dbReference type="SMR" id="Q8ZRV2"/>
<dbReference type="STRING" id="99287.STM0106"/>
<dbReference type="PaxDb" id="99287-STM0106"/>
<dbReference type="KEGG" id="stm:STM0106"/>
<dbReference type="PATRIC" id="fig|99287.12.peg.109"/>
<dbReference type="HOGENOM" id="CLU_000604_1_22_6"/>
<dbReference type="OMA" id="FNRFAHD"/>
<dbReference type="PhylomeDB" id="Q8ZRV2"/>
<dbReference type="BioCyc" id="SENT99287:STM0106-MONOMER"/>
<dbReference type="Proteomes" id="UP000001014">
    <property type="component" value="Chromosome"/>
</dbReference>
<dbReference type="GO" id="GO:0005886">
    <property type="term" value="C:plasma membrane"/>
    <property type="evidence" value="ECO:0007669"/>
    <property type="project" value="UniProtKB-SubCell"/>
</dbReference>
<dbReference type="GO" id="GO:0048502">
    <property type="term" value="F:ABC-type thiamine transporter activity"/>
    <property type="evidence" value="ECO:0007669"/>
    <property type="project" value="UniProtKB-EC"/>
</dbReference>
<dbReference type="GO" id="GO:0005524">
    <property type="term" value="F:ATP binding"/>
    <property type="evidence" value="ECO:0007669"/>
    <property type="project" value="UniProtKB-KW"/>
</dbReference>
<dbReference type="GO" id="GO:0016887">
    <property type="term" value="F:ATP hydrolysis activity"/>
    <property type="evidence" value="ECO:0007669"/>
    <property type="project" value="InterPro"/>
</dbReference>
<dbReference type="FunFam" id="3.40.50.300:FF:001071">
    <property type="entry name" value="Thiamine import ATP-binding protein ThiQ"/>
    <property type="match status" value="1"/>
</dbReference>
<dbReference type="Gene3D" id="3.40.50.300">
    <property type="entry name" value="P-loop containing nucleotide triphosphate hydrolases"/>
    <property type="match status" value="1"/>
</dbReference>
<dbReference type="InterPro" id="IPR003593">
    <property type="entry name" value="AAA+_ATPase"/>
</dbReference>
<dbReference type="InterPro" id="IPR050093">
    <property type="entry name" value="ABC_SmlMolc_Importer"/>
</dbReference>
<dbReference type="InterPro" id="IPR003439">
    <property type="entry name" value="ABC_transporter-like_ATP-bd"/>
</dbReference>
<dbReference type="InterPro" id="IPR017871">
    <property type="entry name" value="ABC_transporter-like_CS"/>
</dbReference>
<dbReference type="InterPro" id="IPR027417">
    <property type="entry name" value="P-loop_NTPase"/>
</dbReference>
<dbReference type="InterPro" id="IPR005968">
    <property type="entry name" value="Thiamine_ABC_ThiQ"/>
</dbReference>
<dbReference type="NCBIfam" id="NF008039">
    <property type="entry name" value="PRK10771.1"/>
    <property type="match status" value="1"/>
</dbReference>
<dbReference type="NCBIfam" id="TIGR01277">
    <property type="entry name" value="thiQ"/>
    <property type="match status" value="1"/>
</dbReference>
<dbReference type="PANTHER" id="PTHR42781">
    <property type="entry name" value="SPERMIDINE/PUTRESCINE IMPORT ATP-BINDING PROTEIN POTA"/>
    <property type="match status" value="1"/>
</dbReference>
<dbReference type="PANTHER" id="PTHR42781:SF1">
    <property type="entry name" value="THIAMINE IMPORT ATP-BINDING PROTEIN THIQ"/>
    <property type="match status" value="1"/>
</dbReference>
<dbReference type="Pfam" id="PF00005">
    <property type="entry name" value="ABC_tran"/>
    <property type="match status" value="1"/>
</dbReference>
<dbReference type="SMART" id="SM00382">
    <property type="entry name" value="AAA"/>
    <property type="match status" value="1"/>
</dbReference>
<dbReference type="SUPFAM" id="SSF52540">
    <property type="entry name" value="P-loop containing nucleoside triphosphate hydrolases"/>
    <property type="match status" value="1"/>
</dbReference>
<dbReference type="PROSITE" id="PS00211">
    <property type="entry name" value="ABC_TRANSPORTER_1"/>
    <property type="match status" value="1"/>
</dbReference>
<dbReference type="PROSITE" id="PS50893">
    <property type="entry name" value="ABC_TRANSPORTER_2"/>
    <property type="match status" value="1"/>
</dbReference>
<dbReference type="PROSITE" id="PS51288">
    <property type="entry name" value="THIQ"/>
    <property type="match status" value="1"/>
</dbReference>
<keyword id="KW-0067">ATP-binding</keyword>
<keyword id="KW-0997">Cell inner membrane</keyword>
<keyword id="KW-1003">Cell membrane</keyword>
<keyword id="KW-0472">Membrane</keyword>
<keyword id="KW-0547">Nucleotide-binding</keyword>
<keyword id="KW-1185">Reference proteome</keyword>
<keyword id="KW-1278">Translocase</keyword>
<keyword id="KW-0813">Transport</keyword>
<reference key="1">
    <citation type="journal article" date="2001" name="Nature">
        <title>Complete genome sequence of Salmonella enterica serovar Typhimurium LT2.</title>
        <authorList>
            <person name="McClelland M."/>
            <person name="Sanderson K.E."/>
            <person name="Spieth J."/>
            <person name="Clifton S.W."/>
            <person name="Latreille P."/>
            <person name="Courtney L."/>
            <person name="Porwollik S."/>
            <person name="Ali J."/>
            <person name="Dante M."/>
            <person name="Du F."/>
            <person name="Hou S."/>
            <person name="Layman D."/>
            <person name="Leonard S."/>
            <person name="Nguyen C."/>
            <person name="Scott K."/>
            <person name="Holmes A."/>
            <person name="Grewal N."/>
            <person name="Mulvaney E."/>
            <person name="Ryan E."/>
            <person name="Sun H."/>
            <person name="Florea L."/>
            <person name="Miller W."/>
            <person name="Stoneking T."/>
            <person name="Nhan M."/>
            <person name="Waterston R."/>
            <person name="Wilson R.K."/>
        </authorList>
    </citation>
    <scope>NUCLEOTIDE SEQUENCE [LARGE SCALE GENOMIC DNA]</scope>
    <source>
        <strain>LT2 / SGSC1412 / ATCC 700720</strain>
    </source>
</reference>
<reference key="2">
    <citation type="journal article" date="1998" name="J. Biol. Chem.">
        <title>thiBPQ encodes an ABC transporter required for transport of thiamine and thiamine pyrophosphate in Salmonella typhimurium.</title>
        <authorList>
            <person name="Webb E."/>
            <person name="Claas K."/>
            <person name="Downs D."/>
        </authorList>
    </citation>
    <scope>FUNCTION IN THIAMINE AND THIAMINE PYROPHOSPHATE TRANSPORT</scope>
    <scope>CATALYTIC ACTIVITY</scope>
    <scope>SUBUNIT</scope>
    <scope>INDUCTION</scope>
    <scope>DISRUPTION PHENOTYPE</scope>
    <source>
        <strain>LT2</strain>
    </source>
</reference>
<organism>
    <name type="scientific">Salmonella typhimurium (strain LT2 / SGSC1412 / ATCC 700720)</name>
    <dbReference type="NCBI Taxonomy" id="99287"/>
    <lineage>
        <taxon>Bacteria</taxon>
        <taxon>Pseudomonadati</taxon>
        <taxon>Pseudomonadota</taxon>
        <taxon>Gammaproteobacteria</taxon>
        <taxon>Enterobacterales</taxon>
        <taxon>Enterobacteriaceae</taxon>
        <taxon>Salmonella</taxon>
    </lineage>
</organism>
<evidence type="ECO:0000255" key="1">
    <source>
        <dbReference type="HAMAP-Rule" id="MF_01723"/>
    </source>
</evidence>
<evidence type="ECO:0000269" key="2">
    <source>
    </source>
</evidence>
<evidence type="ECO:0000303" key="3">
    <source>
    </source>
</evidence>
<evidence type="ECO:0000305" key="4"/>
<evidence type="ECO:0000305" key="5">
    <source>
    </source>
</evidence>
<name>THIQ_SALTY</name>
<accession>Q8ZRV2</accession>